<reference key="1">
    <citation type="journal article" date="2008" name="J. Bacteriol.">
        <title>Comparative genome analysis of 'Candidatus Phytoplasma australiense' (subgroup tuf-Australia I; rp-A) and 'Ca. Phytoplasma asteris' strains OY-M and AY-WB.</title>
        <authorList>
            <person name="Tran-Nguyen L.T."/>
            <person name="Kube M."/>
            <person name="Schneider B."/>
            <person name="Reinhardt R."/>
            <person name="Gibb K.S."/>
        </authorList>
    </citation>
    <scope>NUCLEOTIDE SEQUENCE [LARGE SCALE GENOMIC DNA]</scope>
</reference>
<comment type="function">
    <text evidence="1">Located on the platform of the 30S subunit, it bridges several disparate RNA helices of the 16S rRNA. Forms part of the Shine-Dalgarno cleft in the 70S ribosome.</text>
</comment>
<comment type="subunit">
    <text evidence="1">Part of the 30S ribosomal subunit. Interacts with proteins S7 and S18. Binds to IF-3.</text>
</comment>
<comment type="similarity">
    <text evidence="1">Belongs to the universal ribosomal protein uS11 family.</text>
</comment>
<organism>
    <name type="scientific">Phytoplasma australiense</name>
    <dbReference type="NCBI Taxonomy" id="59748"/>
    <lineage>
        <taxon>Bacteria</taxon>
        <taxon>Bacillati</taxon>
        <taxon>Mycoplasmatota</taxon>
        <taxon>Mollicutes</taxon>
        <taxon>Acholeplasmatales</taxon>
        <taxon>Acholeplasmataceae</taxon>
        <taxon>Candidatus Phytoplasma</taxon>
        <taxon>16SrXII (Stolbur group)</taxon>
    </lineage>
</organism>
<sequence>MARRKTTKRKVKKNVPFGIAHIHTTFNNTIVTITDANGNAITWSSAGALGFKGSRKSTPFAAQLAAEAVAKAAMEHGMAKIEVFIAGPGPGREAAVRSLQAAGLEITAIKDVTAVPHNGCRPPKSPRG</sequence>
<evidence type="ECO:0000255" key="1">
    <source>
        <dbReference type="HAMAP-Rule" id="MF_01310"/>
    </source>
</evidence>
<evidence type="ECO:0000305" key="2"/>
<gene>
    <name evidence="1" type="primary">rpsK</name>
    <name type="ordered locus">PA0561</name>
</gene>
<protein>
    <recommendedName>
        <fullName evidence="1">Small ribosomal subunit protein uS11</fullName>
    </recommendedName>
    <alternativeName>
        <fullName evidence="2">30S ribosomal protein S11</fullName>
    </alternativeName>
</protein>
<feature type="chain" id="PRO_1000141120" description="Small ribosomal subunit protein uS11">
    <location>
        <begin position="1"/>
        <end position="128"/>
    </location>
</feature>
<keyword id="KW-1185">Reference proteome</keyword>
<keyword id="KW-0687">Ribonucleoprotein</keyword>
<keyword id="KW-0689">Ribosomal protein</keyword>
<keyword id="KW-0694">RNA-binding</keyword>
<keyword id="KW-0699">rRNA-binding</keyword>
<name>RS11_PHYAS</name>
<dbReference type="EMBL" id="AM422018">
    <property type="protein sequence ID" value="CAM11895.1"/>
    <property type="molecule type" value="Genomic_DNA"/>
</dbReference>
<dbReference type="SMR" id="B1VAC2"/>
<dbReference type="STRING" id="59748.PA0561"/>
<dbReference type="KEGG" id="pal:PA0561"/>
<dbReference type="eggNOG" id="COG0100">
    <property type="taxonomic scope" value="Bacteria"/>
</dbReference>
<dbReference type="Proteomes" id="UP000008323">
    <property type="component" value="Chromosome"/>
</dbReference>
<dbReference type="GO" id="GO:1990904">
    <property type="term" value="C:ribonucleoprotein complex"/>
    <property type="evidence" value="ECO:0007669"/>
    <property type="project" value="UniProtKB-KW"/>
</dbReference>
<dbReference type="GO" id="GO:0005840">
    <property type="term" value="C:ribosome"/>
    <property type="evidence" value="ECO:0007669"/>
    <property type="project" value="UniProtKB-KW"/>
</dbReference>
<dbReference type="GO" id="GO:0019843">
    <property type="term" value="F:rRNA binding"/>
    <property type="evidence" value="ECO:0007669"/>
    <property type="project" value="UniProtKB-UniRule"/>
</dbReference>
<dbReference type="GO" id="GO:0003735">
    <property type="term" value="F:structural constituent of ribosome"/>
    <property type="evidence" value="ECO:0007669"/>
    <property type="project" value="InterPro"/>
</dbReference>
<dbReference type="GO" id="GO:0006412">
    <property type="term" value="P:translation"/>
    <property type="evidence" value="ECO:0007669"/>
    <property type="project" value="UniProtKB-UniRule"/>
</dbReference>
<dbReference type="FunFam" id="3.30.420.80:FF:000001">
    <property type="entry name" value="30S ribosomal protein S11"/>
    <property type="match status" value="1"/>
</dbReference>
<dbReference type="Gene3D" id="3.30.420.80">
    <property type="entry name" value="Ribosomal protein S11"/>
    <property type="match status" value="1"/>
</dbReference>
<dbReference type="HAMAP" id="MF_01310">
    <property type="entry name" value="Ribosomal_uS11"/>
    <property type="match status" value="1"/>
</dbReference>
<dbReference type="InterPro" id="IPR001971">
    <property type="entry name" value="Ribosomal_uS11"/>
</dbReference>
<dbReference type="InterPro" id="IPR019981">
    <property type="entry name" value="Ribosomal_uS11_bac-type"/>
</dbReference>
<dbReference type="InterPro" id="IPR036967">
    <property type="entry name" value="Ribosomal_uS11_sf"/>
</dbReference>
<dbReference type="NCBIfam" id="NF003698">
    <property type="entry name" value="PRK05309.1"/>
    <property type="match status" value="1"/>
</dbReference>
<dbReference type="NCBIfam" id="TIGR03632">
    <property type="entry name" value="uS11_bact"/>
    <property type="match status" value="1"/>
</dbReference>
<dbReference type="PANTHER" id="PTHR11759">
    <property type="entry name" value="40S RIBOSOMAL PROTEIN S14/30S RIBOSOMAL PROTEIN S11"/>
    <property type="match status" value="1"/>
</dbReference>
<dbReference type="Pfam" id="PF00411">
    <property type="entry name" value="Ribosomal_S11"/>
    <property type="match status" value="1"/>
</dbReference>
<dbReference type="PIRSF" id="PIRSF002131">
    <property type="entry name" value="Ribosomal_S11"/>
    <property type="match status" value="1"/>
</dbReference>
<dbReference type="SUPFAM" id="SSF53137">
    <property type="entry name" value="Translational machinery components"/>
    <property type="match status" value="1"/>
</dbReference>
<proteinExistence type="inferred from homology"/>
<accession>B1VAC2</accession>